<organism>
    <name type="scientific">Korarchaeum cryptofilum (strain OPF8)</name>
    <dbReference type="NCBI Taxonomy" id="374847"/>
    <lineage>
        <taxon>Archaea</taxon>
        <taxon>Thermoproteota</taxon>
        <taxon>Candidatus Korarchaeia</taxon>
        <taxon>Candidatus Korarchaeales</taxon>
        <taxon>Candidatus Korarchaeaceae</taxon>
        <taxon>Candidatus Korarchaeum</taxon>
    </lineage>
</organism>
<gene>
    <name evidence="2" type="primary">fen</name>
    <name type="ordered locus">Kcr_1402</name>
</gene>
<name>FEN_KORCO</name>
<reference key="1">
    <citation type="journal article" date="2008" name="Proc. Natl. Acad. Sci. U.S.A.">
        <title>A korarchaeal genome reveals new insights into the evolution of the Archaea.</title>
        <authorList>
            <person name="Elkins J.G."/>
            <person name="Podar M."/>
            <person name="Graham D.E."/>
            <person name="Makarova K.S."/>
            <person name="Wolf Y."/>
            <person name="Randau L."/>
            <person name="Hedlund B.P."/>
            <person name="Brochier-Armanet C."/>
            <person name="Kunin V."/>
            <person name="Anderson I."/>
            <person name="Lapidus A."/>
            <person name="Goltsman E."/>
            <person name="Barry K."/>
            <person name="Koonin E.V."/>
            <person name="Hugenholtz P."/>
            <person name="Kyrpides N."/>
            <person name="Wanner G."/>
            <person name="Richardson P."/>
            <person name="Keller M."/>
            <person name="Stetter K.O."/>
        </authorList>
    </citation>
    <scope>NUCLEOTIDE SEQUENCE [LARGE SCALE GENOMIC DNA]</scope>
    <source>
        <strain>OPF8</strain>
    </source>
</reference>
<keyword id="KW-0227">DNA damage</keyword>
<keyword id="KW-0234">DNA repair</keyword>
<keyword id="KW-0235">DNA replication</keyword>
<keyword id="KW-0255">Endonuclease</keyword>
<keyword id="KW-0269">Exonuclease</keyword>
<keyword id="KW-0378">Hydrolase</keyword>
<keyword id="KW-0460">Magnesium</keyword>
<keyword id="KW-0479">Metal-binding</keyword>
<keyword id="KW-0540">Nuclease</keyword>
<keyword id="KW-1185">Reference proteome</keyword>
<protein>
    <recommendedName>
        <fullName evidence="2">Flap endonuclease 1</fullName>
        <shortName evidence="2">FEN-1</shortName>
        <ecNumber evidence="2">3.1.-.-</ecNumber>
    </recommendedName>
    <alternativeName>
        <fullName evidence="2">Flap structure-specific endonuclease 1</fullName>
    </alternativeName>
</protein>
<accession>B1L6R9</accession>
<sequence length="342" mass="38576">MGVKIGELIEDKVELELSDIAGKKIALDAFNAMYQFLAKVRQPDGTPLMTSKGEITSVHSGIFYRTANFLKEGIIPIYVFDGEKPSFKSRAIEERVRAREEAELKWKEALEIGDLEEARKYAQAALNITGDIVEDCKTILKLMGVPIVQAPSEGEAQAAHMAMKGDVWATASQDYDSLLFGAPRLIRNLTITGKRKLPGKEVYVDINPELIELESVLKRNGISREQLIMIGILVGTDYNLGGVKGIGVKRALELVKKYKRPEDLFSKVPWEFDVDPISIYEFFLNPPTTDDYDTSLKRPMSDELLKFMVEEHEFSEERVKKVINEIEESYRMLSGGGLESWF</sequence>
<feature type="chain" id="PRO_1000130403" description="Flap endonuclease 1">
    <location>
        <begin position="1"/>
        <end position="342"/>
    </location>
</feature>
<feature type="region of interest" description="N-domain">
    <location>
        <begin position="1"/>
        <end position="99"/>
    </location>
</feature>
<feature type="region of interest" description="I-domain">
    <location>
        <begin position="117"/>
        <end position="259"/>
    </location>
</feature>
<feature type="binding site" evidence="2">
    <location>
        <position position="28"/>
    </location>
    <ligand>
        <name>Mg(2+)</name>
        <dbReference type="ChEBI" id="CHEBI:18420"/>
        <label>1</label>
    </ligand>
</feature>
<feature type="binding site" evidence="2">
    <location>
        <position position="81"/>
    </location>
    <ligand>
        <name>Mg(2+)</name>
        <dbReference type="ChEBI" id="CHEBI:18420"/>
        <label>1</label>
    </ligand>
</feature>
<feature type="binding site" evidence="2">
    <location>
        <position position="153"/>
    </location>
    <ligand>
        <name>Mg(2+)</name>
        <dbReference type="ChEBI" id="CHEBI:18420"/>
        <label>1</label>
    </ligand>
</feature>
<feature type="binding site" evidence="2">
    <location>
        <position position="155"/>
    </location>
    <ligand>
        <name>Mg(2+)</name>
        <dbReference type="ChEBI" id="CHEBI:18420"/>
        <label>1</label>
    </ligand>
</feature>
<feature type="binding site" evidence="2">
    <location>
        <position position="174"/>
    </location>
    <ligand>
        <name>Mg(2+)</name>
        <dbReference type="ChEBI" id="CHEBI:18420"/>
        <label>2</label>
    </ligand>
</feature>
<feature type="binding site" evidence="2">
    <location>
        <position position="176"/>
    </location>
    <ligand>
        <name>Mg(2+)</name>
        <dbReference type="ChEBI" id="CHEBI:18420"/>
        <label>2</label>
    </ligand>
</feature>
<feature type="binding site" evidence="2">
    <location>
        <position position="237"/>
    </location>
    <ligand>
        <name>Mg(2+)</name>
        <dbReference type="ChEBI" id="CHEBI:18420"/>
        <label>2</label>
    </ligand>
</feature>
<dbReference type="EC" id="3.1.-.-" evidence="2"/>
<dbReference type="EMBL" id="CP000968">
    <property type="protein sequence ID" value="ACB08148.1"/>
    <property type="molecule type" value="Genomic_DNA"/>
</dbReference>
<dbReference type="RefSeq" id="WP_012310045.1">
    <property type="nucleotide sequence ID" value="NC_010482.1"/>
</dbReference>
<dbReference type="SMR" id="B1L6R9"/>
<dbReference type="FunCoup" id="B1L6R9">
    <property type="interactions" value="156"/>
</dbReference>
<dbReference type="STRING" id="374847.Kcr_1402"/>
<dbReference type="EnsemblBacteria" id="ACB08148">
    <property type="protein sequence ID" value="ACB08148"/>
    <property type="gene ID" value="Kcr_1402"/>
</dbReference>
<dbReference type="GeneID" id="6094679"/>
<dbReference type="KEGG" id="kcr:Kcr_1402"/>
<dbReference type="eggNOG" id="arCOG04050">
    <property type="taxonomic scope" value="Archaea"/>
</dbReference>
<dbReference type="HOGENOM" id="CLU_032444_0_0_2"/>
<dbReference type="InParanoid" id="B1L6R9"/>
<dbReference type="OrthoDB" id="9593at2157"/>
<dbReference type="PhylomeDB" id="B1L6R9"/>
<dbReference type="Proteomes" id="UP000001686">
    <property type="component" value="Chromosome"/>
</dbReference>
<dbReference type="GO" id="GO:0008409">
    <property type="term" value="F:5'-3' exonuclease activity"/>
    <property type="evidence" value="ECO:0007669"/>
    <property type="project" value="UniProtKB-UniRule"/>
</dbReference>
<dbReference type="GO" id="GO:0017108">
    <property type="term" value="F:5'-flap endonuclease activity"/>
    <property type="evidence" value="ECO:0000318"/>
    <property type="project" value="GO_Central"/>
</dbReference>
<dbReference type="GO" id="GO:0003677">
    <property type="term" value="F:DNA binding"/>
    <property type="evidence" value="ECO:0007669"/>
    <property type="project" value="UniProtKB-UniRule"/>
</dbReference>
<dbReference type="GO" id="GO:0000287">
    <property type="term" value="F:magnesium ion binding"/>
    <property type="evidence" value="ECO:0007669"/>
    <property type="project" value="UniProtKB-UniRule"/>
</dbReference>
<dbReference type="GO" id="GO:0006281">
    <property type="term" value="P:DNA repair"/>
    <property type="evidence" value="ECO:0007669"/>
    <property type="project" value="UniProtKB-UniRule"/>
</dbReference>
<dbReference type="GO" id="GO:0043137">
    <property type="term" value="P:DNA replication, removal of RNA primer"/>
    <property type="evidence" value="ECO:0007669"/>
    <property type="project" value="UniProtKB-UniRule"/>
</dbReference>
<dbReference type="CDD" id="cd09903">
    <property type="entry name" value="H3TH_FEN1-Arc"/>
    <property type="match status" value="1"/>
</dbReference>
<dbReference type="CDD" id="cd09867">
    <property type="entry name" value="PIN_FEN1"/>
    <property type="match status" value="1"/>
</dbReference>
<dbReference type="FunFam" id="1.10.150.20:FF:000087">
    <property type="entry name" value="Flap endonuclease 1"/>
    <property type="match status" value="1"/>
</dbReference>
<dbReference type="FunFam" id="3.40.50.1010:FF:000016">
    <property type="entry name" value="Flap endonuclease 1"/>
    <property type="match status" value="1"/>
</dbReference>
<dbReference type="Gene3D" id="1.10.150.20">
    <property type="entry name" value="5' to 3' exonuclease, C-terminal subdomain"/>
    <property type="match status" value="1"/>
</dbReference>
<dbReference type="Gene3D" id="3.40.50.1010">
    <property type="entry name" value="5'-nuclease"/>
    <property type="match status" value="1"/>
</dbReference>
<dbReference type="HAMAP" id="MF_00614">
    <property type="entry name" value="Fen"/>
    <property type="match status" value="1"/>
</dbReference>
<dbReference type="InterPro" id="IPR036279">
    <property type="entry name" value="5-3_exonuclease_C_sf"/>
</dbReference>
<dbReference type="InterPro" id="IPR023426">
    <property type="entry name" value="Flap_endonuc"/>
</dbReference>
<dbReference type="InterPro" id="IPR019973">
    <property type="entry name" value="Flap_endonuc_arc"/>
</dbReference>
<dbReference type="InterPro" id="IPR008918">
    <property type="entry name" value="HhH2"/>
</dbReference>
<dbReference type="InterPro" id="IPR029060">
    <property type="entry name" value="PIN-like_dom_sf"/>
</dbReference>
<dbReference type="InterPro" id="IPR006086">
    <property type="entry name" value="XPG-I_dom"/>
</dbReference>
<dbReference type="InterPro" id="IPR006084">
    <property type="entry name" value="XPG/Rad2"/>
</dbReference>
<dbReference type="InterPro" id="IPR019974">
    <property type="entry name" value="XPG_CS"/>
</dbReference>
<dbReference type="InterPro" id="IPR006085">
    <property type="entry name" value="XPG_DNA_repair_N"/>
</dbReference>
<dbReference type="NCBIfam" id="TIGR03674">
    <property type="entry name" value="fen_arch"/>
    <property type="match status" value="1"/>
</dbReference>
<dbReference type="PANTHER" id="PTHR11081:SF9">
    <property type="entry name" value="FLAP ENDONUCLEASE 1"/>
    <property type="match status" value="1"/>
</dbReference>
<dbReference type="PANTHER" id="PTHR11081">
    <property type="entry name" value="FLAP ENDONUCLEASE FAMILY MEMBER"/>
    <property type="match status" value="1"/>
</dbReference>
<dbReference type="Pfam" id="PF00867">
    <property type="entry name" value="XPG_I"/>
    <property type="match status" value="1"/>
</dbReference>
<dbReference type="Pfam" id="PF00752">
    <property type="entry name" value="XPG_N"/>
    <property type="match status" value="1"/>
</dbReference>
<dbReference type="PRINTS" id="PR00853">
    <property type="entry name" value="XPGRADSUPER"/>
</dbReference>
<dbReference type="SMART" id="SM00279">
    <property type="entry name" value="HhH2"/>
    <property type="match status" value="1"/>
</dbReference>
<dbReference type="SMART" id="SM00484">
    <property type="entry name" value="XPGI"/>
    <property type="match status" value="1"/>
</dbReference>
<dbReference type="SMART" id="SM00485">
    <property type="entry name" value="XPGN"/>
    <property type="match status" value="1"/>
</dbReference>
<dbReference type="SUPFAM" id="SSF47807">
    <property type="entry name" value="5' to 3' exonuclease, C-terminal subdomain"/>
    <property type="match status" value="1"/>
</dbReference>
<dbReference type="SUPFAM" id="SSF88723">
    <property type="entry name" value="PIN domain-like"/>
    <property type="match status" value="1"/>
</dbReference>
<dbReference type="PROSITE" id="PS00841">
    <property type="entry name" value="XPG_1"/>
    <property type="match status" value="1"/>
</dbReference>
<comment type="function">
    <text evidence="1">Structure-specific nuclease with 5'-flap endonuclease and 5'-3' exonuclease activities involved in DNA replication and repair. During DNA replication, cleaves the 5'-overhanging flap structure that is generated by displacement synthesis when DNA polymerase encounters the 5'-end of a downstream Okazaki fragment. Binds the unpaired 3'-DNA end and kinks the DNA to facilitate 5' cleavage specificity. Cleaves one nucleotide into the double-stranded DNA from the junction in flap DNA, leaving a nick for ligation. Also involved in the base excision repair (BER) pathway. Acts as a genome stabilization factor that prevents flaps from equilibrating into structures that lead to duplications and deletions. Also possesses 5'-3' exonuclease activity on nicked or gapped double-stranded DNA (By similarity).</text>
</comment>
<comment type="cofactor">
    <cofactor evidence="2">
        <name>Mg(2+)</name>
        <dbReference type="ChEBI" id="CHEBI:18420"/>
    </cofactor>
    <text evidence="2">Binds 2 magnesium ions per subunit. They probably participate in the reaction catalyzed by the enzyme. May bind an additional third magnesium ion after substrate binding.</text>
</comment>
<comment type="subunit">
    <text evidence="2">Interacts with PCNA. PCNA stimulates the nuclease activity without altering cleavage specificity.</text>
</comment>
<comment type="similarity">
    <text evidence="2">Belongs to the XPG/RAD2 endonuclease family. FEN1 subfamily.</text>
</comment>
<proteinExistence type="inferred from homology"/>
<evidence type="ECO:0000250" key="1"/>
<evidence type="ECO:0000255" key="2">
    <source>
        <dbReference type="HAMAP-Rule" id="MF_00614"/>
    </source>
</evidence>